<organism>
    <name type="scientific">Xenopus tropicalis</name>
    <name type="common">Western clawed frog</name>
    <name type="synonym">Silurana tropicalis</name>
    <dbReference type="NCBI Taxonomy" id="8364"/>
    <lineage>
        <taxon>Eukaryota</taxon>
        <taxon>Metazoa</taxon>
        <taxon>Chordata</taxon>
        <taxon>Craniata</taxon>
        <taxon>Vertebrata</taxon>
        <taxon>Euteleostomi</taxon>
        <taxon>Amphibia</taxon>
        <taxon>Batrachia</taxon>
        <taxon>Anura</taxon>
        <taxon>Pipoidea</taxon>
        <taxon>Pipidae</taxon>
        <taxon>Xenopodinae</taxon>
        <taxon>Xenopus</taxon>
        <taxon>Silurana</taxon>
    </lineage>
</organism>
<name>TRMBB_XENTR</name>
<sequence>MSVCMPQKRYYRQRAHSNPMADHTFQYPVCPEQMDWSPLYPQYFPQQEEAGGAQVEFADIGCGYGGLLVQLSLLFPQQLILGLEIRVKVSDYVQDRIRSLRVAEPGRYQNIACLRSNAMKYLPNFFRKGQLSKMFFLFPDPHFKKTKHKWRIISPTLLAEYAYTLRIGGLVYTNTDVEEVHEWIVQHFSDHPLFSRVTEEQLADDIIVGHLGTCTEEGKKVQRNGGKNFLAVFRRVEDPQT</sequence>
<feature type="chain" id="PRO_0000370561" description="tRNA (guanine-N(7)-)-methyltransferase B">
    <location>
        <begin position="1"/>
        <end position="241"/>
    </location>
</feature>
<feature type="region of interest" description="AlphaC helix" evidence="2">
    <location>
        <begin position="141"/>
        <end position="149"/>
    </location>
</feature>
<feature type="region of interest" description="Alpha6 helix" evidence="2">
    <location>
        <begin position="215"/>
        <end position="223"/>
    </location>
</feature>
<feature type="active site" evidence="2">
    <location>
        <position position="140"/>
    </location>
</feature>
<feature type="binding site" evidence="2">
    <location>
        <position position="61"/>
    </location>
    <ligand>
        <name>S-adenosyl-L-methionine</name>
        <dbReference type="ChEBI" id="CHEBI:59789"/>
    </ligand>
</feature>
<feature type="binding site" evidence="2">
    <location>
        <position position="84"/>
    </location>
    <ligand>
        <name>S-adenosyl-L-methionine</name>
        <dbReference type="ChEBI" id="CHEBI:59789"/>
    </ligand>
</feature>
<feature type="binding site" evidence="2">
    <location>
        <position position="86"/>
    </location>
    <ligand>
        <name>S-adenosyl-L-methionine</name>
        <dbReference type="ChEBI" id="CHEBI:59789"/>
    </ligand>
</feature>
<feature type="binding site" evidence="2">
    <location>
        <position position="117"/>
    </location>
    <ligand>
        <name>S-adenosyl-L-methionine</name>
        <dbReference type="ChEBI" id="CHEBI:59789"/>
    </ligand>
</feature>
<feature type="binding site" evidence="2">
    <location>
        <position position="118"/>
    </location>
    <ligand>
        <name>S-adenosyl-L-methionine</name>
        <dbReference type="ChEBI" id="CHEBI:59789"/>
    </ligand>
</feature>
<feature type="binding site" evidence="2">
    <location>
        <position position="137"/>
    </location>
    <ligand>
        <name>S-adenosyl-L-methionine</name>
        <dbReference type="ChEBI" id="CHEBI:59789"/>
    </ligand>
</feature>
<feature type="binding site" evidence="2">
    <location>
        <position position="215"/>
    </location>
    <ligand>
        <name>S-adenosyl-L-methionine</name>
        <dbReference type="ChEBI" id="CHEBI:59789"/>
    </ligand>
</feature>
<feature type="binding site" evidence="2">
    <location>
        <position position="217"/>
    </location>
    <ligand>
        <name>S-adenosyl-L-methionine</name>
        <dbReference type="ChEBI" id="CHEBI:59789"/>
    </ligand>
</feature>
<dbReference type="EC" id="2.1.1.33" evidence="2"/>
<dbReference type="EC" id="2.1.1.-" evidence="2"/>
<dbReference type="EMBL" id="BC157713">
    <property type="protein sequence ID" value="AAI57714.1"/>
    <property type="molecule type" value="mRNA"/>
</dbReference>
<dbReference type="SMR" id="A9UMM1"/>
<dbReference type="InParanoid" id="A9UMM1"/>
<dbReference type="UniPathway" id="UPA00989"/>
<dbReference type="Proteomes" id="UP000008143">
    <property type="component" value="Unplaced"/>
</dbReference>
<dbReference type="GO" id="GO:0005634">
    <property type="term" value="C:nucleus"/>
    <property type="evidence" value="ECO:0000250"/>
    <property type="project" value="UniProtKB"/>
</dbReference>
<dbReference type="GO" id="GO:0106143">
    <property type="term" value="C:tRNA (m7G46) methyltransferase complex"/>
    <property type="evidence" value="ECO:0000250"/>
    <property type="project" value="UniProtKB"/>
</dbReference>
<dbReference type="GO" id="GO:0160090">
    <property type="term" value="F:internal mRNA (guanine-N7-)-methyltransferase activity"/>
    <property type="evidence" value="ECO:0007669"/>
    <property type="project" value="RHEA"/>
</dbReference>
<dbReference type="GO" id="GO:0008176">
    <property type="term" value="F:tRNA (guanine(46)-N7)-methyltransferase activity"/>
    <property type="evidence" value="ECO:0000250"/>
    <property type="project" value="UniProtKB"/>
</dbReference>
<dbReference type="GO" id="GO:0000049">
    <property type="term" value="F:tRNA binding"/>
    <property type="evidence" value="ECO:0007669"/>
    <property type="project" value="UniProtKB-UniRule"/>
</dbReference>
<dbReference type="GO" id="GO:0106004">
    <property type="term" value="P:tRNA (guanine-N7)-methylation"/>
    <property type="evidence" value="ECO:0000250"/>
    <property type="project" value="UniProtKB"/>
</dbReference>
<dbReference type="GO" id="GO:0006400">
    <property type="term" value="P:tRNA modification"/>
    <property type="evidence" value="ECO:0000250"/>
    <property type="project" value="UniProtKB"/>
</dbReference>
<dbReference type="FunFam" id="3.40.50.150:FF:000060">
    <property type="entry name" value="tRNA (guanine-N(7)-)-methyltransferase"/>
    <property type="match status" value="1"/>
</dbReference>
<dbReference type="Gene3D" id="3.40.50.150">
    <property type="entry name" value="Vaccinia Virus protein VP39"/>
    <property type="match status" value="1"/>
</dbReference>
<dbReference type="HAMAP" id="MF_03055">
    <property type="entry name" value="tRNA_methyltr_TrmB_euk"/>
    <property type="match status" value="1"/>
</dbReference>
<dbReference type="InterPro" id="IPR029063">
    <property type="entry name" value="SAM-dependent_MTases_sf"/>
</dbReference>
<dbReference type="InterPro" id="IPR025763">
    <property type="entry name" value="Trm8_euk"/>
</dbReference>
<dbReference type="InterPro" id="IPR003358">
    <property type="entry name" value="tRNA_(Gua-N-7)_MeTrfase_Trmb"/>
</dbReference>
<dbReference type="NCBIfam" id="TIGR00091">
    <property type="entry name" value="tRNA (guanosine(46)-N7)-methyltransferase TrmB"/>
    <property type="match status" value="1"/>
</dbReference>
<dbReference type="PANTHER" id="PTHR23417">
    <property type="entry name" value="3-DEOXY-D-MANNO-OCTULOSONIC-ACID TRANSFERASE/TRNA GUANINE-N 7 - -METHYLTRANSFERASE"/>
    <property type="match status" value="1"/>
</dbReference>
<dbReference type="PANTHER" id="PTHR23417:SF16">
    <property type="entry name" value="TRNA (GUANINE-N(7)-)-METHYLTRANSFERASE"/>
    <property type="match status" value="1"/>
</dbReference>
<dbReference type="Pfam" id="PF02390">
    <property type="entry name" value="Methyltransf_4"/>
    <property type="match status" value="1"/>
</dbReference>
<dbReference type="SUPFAM" id="SSF53335">
    <property type="entry name" value="S-adenosyl-L-methionine-dependent methyltransferases"/>
    <property type="match status" value="1"/>
</dbReference>
<dbReference type="PROSITE" id="PS51625">
    <property type="entry name" value="SAM_MT_TRMB"/>
    <property type="match status" value="1"/>
</dbReference>
<proteinExistence type="evidence at transcript level"/>
<comment type="function">
    <text evidence="1">Catalytic component of METTL1-WDR4 methyltransferase complex that mediates the formation of N(7)-methylguanine in a subset of RNA species, such as tRNAs, mRNAs and microRNAs (miRNAs). Catalyzes the formation of N(7)-methylguanine at position 46 (m7G46) in a large subset of tRNAs that contain the 5'-RAGGU-3' motif within the variable loop. M7G46 interacts with C13-G22 in the D-loop to stabilize tRNA tertiary structure and protect tRNAs from decay. Also acts as a methyltransferase for a subset of internal N(7)-methylguanine in mRNAs. Internal N(7)-methylguanine methylation of mRNAs in response to stress promotes their relocalization to stress granules, thereby suppressing their translation. Also methylates a specific subset of miRNAs.</text>
</comment>
<comment type="catalytic activity">
    <reaction evidence="2">
        <text>guanosine(46) in tRNA + S-adenosyl-L-methionine = N(7)-methylguanosine(46) in tRNA + S-adenosyl-L-homocysteine</text>
        <dbReference type="Rhea" id="RHEA:42708"/>
        <dbReference type="Rhea" id="RHEA-COMP:10188"/>
        <dbReference type="Rhea" id="RHEA-COMP:10189"/>
        <dbReference type="ChEBI" id="CHEBI:57856"/>
        <dbReference type="ChEBI" id="CHEBI:59789"/>
        <dbReference type="ChEBI" id="CHEBI:74269"/>
        <dbReference type="ChEBI" id="CHEBI:74480"/>
        <dbReference type="EC" id="2.1.1.33"/>
    </reaction>
</comment>
<comment type="catalytic activity">
    <reaction evidence="2">
        <text>a guanosine in mRNA + S-adenosyl-L-methionine = an N(7)-methylguanosine in mRNA + S-adenosyl-L-homocysteine</text>
        <dbReference type="Rhea" id="RHEA:60508"/>
        <dbReference type="Rhea" id="RHEA-COMP:15584"/>
        <dbReference type="Rhea" id="RHEA-COMP:15585"/>
        <dbReference type="ChEBI" id="CHEBI:57856"/>
        <dbReference type="ChEBI" id="CHEBI:59789"/>
        <dbReference type="ChEBI" id="CHEBI:74269"/>
        <dbReference type="ChEBI" id="CHEBI:74480"/>
    </reaction>
    <physiologicalReaction direction="left-to-right" evidence="2">
        <dbReference type="Rhea" id="RHEA:60509"/>
    </physiologicalReaction>
</comment>
<comment type="catalytic activity">
    <reaction evidence="2">
        <text>a guanosine in miRNA + S-adenosyl-L-methionine = an N(7)-methylguanosine in miRNA + S-adenosyl-L-homocysteine</text>
        <dbReference type="Rhea" id="RHEA:60512"/>
        <dbReference type="Rhea" id="RHEA-COMP:15587"/>
        <dbReference type="Rhea" id="RHEA-COMP:15588"/>
        <dbReference type="ChEBI" id="CHEBI:57856"/>
        <dbReference type="ChEBI" id="CHEBI:59789"/>
        <dbReference type="ChEBI" id="CHEBI:74269"/>
        <dbReference type="ChEBI" id="CHEBI:74480"/>
    </reaction>
    <physiologicalReaction direction="left-to-right" evidence="2">
        <dbReference type="Rhea" id="RHEA:60513"/>
    </physiologicalReaction>
</comment>
<comment type="pathway">
    <text evidence="2">tRNA modification; N(7)-methylguanine-tRNA biosynthesis.</text>
</comment>
<comment type="subunit">
    <text evidence="2">Catalytic component of the METTL1-WDR4 complex, composed of mettl1 and wdr4.</text>
</comment>
<comment type="subcellular location">
    <subcellularLocation>
        <location evidence="2">Nucleus</location>
    </subcellularLocation>
</comment>
<comment type="similarity">
    <text evidence="2">Belongs to the class I-like SAM-binding methyltransferase superfamily. TrmB family.</text>
</comment>
<gene>
    <name type="primary">mettl1-B</name>
</gene>
<accession>A9UMM1</accession>
<reference key="1">
    <citation type="submission" date="2007-12" db="EMBL/GenBank/DDBJ databases">
        <authorList>
            <consortium name="NIH - Xenopus Gene Collection (XGC) project"/>
        </authorList>
    </citation>
    <scope>NUCLEOTIDE SEQUENCE [LARGE SCALE MRNA]</scope>
    <source>
        <strain>TGA IC</strain>
        <tissue>Testis</tissue>
    </source>
</reference>
<evidence type="ECO:0000250" key="1">
    <source>
        <dbReference type="UniProtKB" id="Q5XJ57"/>
    </source>
</evidence>
<evidence type="ECO:0000255" key="2">
    <source>
        <dbReference type="HAMAP-Rule" id="MF_03055"/>
    </source>
</evidence>
<keyword id="KW-0489">Methyltransferase</keyword>
<keyword id="KW-0539">Nucleus</keyword>
<keyword id="KW-1185">Reference proteome</keyword>
<keyword id="KW-0694">RNA-binding</keyword>
<keyword id="KW-0949">S-adenosyl-L-methionine</keyword>
<keyword id="KW-0808">Transferase</keyword>
<keyword id="KW-0819">tRNA processing</keyword>
<keyword id="KW-0820">tRNA-binding</keyword>
<protein>
    <recommendedName>
        <fullName evidence="2">tRNA (guanine-N(7)-)-methyltransferase B</fullName>
        <ecNumber evidence="2">2.1.1.33</ecNumber>
    </recommendedName>
    <alternativeName>
        <fullName evidence="2">Methyltransferase-like protein 1-B</fullName>
    </alternativeName>
    <alternativeName>
        <fullName evidence="2">mRNA (guanine-N(7)-)-methyltransferase</fullName>
        <ecNumber evidence="2">2.1.1.-</ecNumber>
    </alternativeName>
    <alternativeName>
        <fullName evidence="2">miRNA (guanine-N(7)-)-methyltransferase</fullName>
        <ecNumber evidence="2">2.1.1.-</ecNumber>
    </alternativeName>
    <alternativeName>
        <fullName evidence="2">tRNA (guanine(46)-N(7))-methyltransferase B</fullName>
    </alternativeName>
    <alternativeName>
        <fullName evidence="2">tRNA(m7G46)-methyltransferase B</fullName>
    </alternativeName>
</protein>